<protein>
    <recommendedName>
        <fullName evidence="1">Ubiquinone biosynthesis O-methyltransferase</fullName>
    </recommendedName>
    <alternativeName>
        <fullName evidence="1">2-polyprenyl-6-hydroxyphenol methylase</fullName>
        <ecNumber evidence="1">2.1.1.222</ecNumber>
    </alternativeName>
    <alternativeName>
        <fullName evidence="1">3-demethylubiquinone 3-O-methyltransferase</fullName>
        <ecNumber evidence="1">2.1.1.64</ecNumber>
    </alternativeName>
</protein>
<dbReference type="EC" id="2.1.1.222" evidence="1"/>
<dbReference type="EC" id="2.1.1.64" evidence="1"/>
<dbReference type="EMBL" id="CP001157">
    <property type="protein sequence ID" value="ACO77791.1"/>
    <property type="molecule type" value="Genomic_DNA"/>
</dbReference>
<dbReference type="RefSeq" id="WP_012700207.1">
    <property type="nucleotide sequence ID" value="NC_012560.1"/>
</dbReference>
<dbReference type="SMR" id="C1DRQ3"/>
<dbReference type="STRING" id="322710.Avin_15760"/>
<dbReference type="EnsemblBacteria" id="ACO77791">
    <property type="protein sequence ID" value="ACO77791"/>
    <property type="gene ID" value="Avin_15760"/>
</dbReference>
<dbReference type="GeneID" id="88184867"/>
<dbReference type="KEGG" id="avn:Avin_15760"/>
<dbReference type="eggNOG" id="COG2227">
    <property type="taxonomic scope" value="Bacteria"/>
</dbReference>
<dbReference type="HOGENOM" id="CLU_042432_5_0_6"/>
<dbReference type="OrthoDB" id="9801538at2"/>
<dbReference type="UniPathway" id="UPA00232"/>
<dbReference type="Proteomes" id="UP000002424">
    <property type="component" value="Chromosome"/>
</dbReference>
<dbReference type="GO" id="GO:0102208">
    <property type="term" value="F:2-polyprenyl-6-hydroxyphenol methylase activity"/>
    <property type="evidence" value="ECO:0007669"/>
    <property type="project" value="UniProtKB-EC"/>
</dbReference>
<dbReference type="GO" id="GO:0061542">
    <property type="term" value="F:3-demethylubiquinol 3-O-methyltransferase activity"/>
    <property type="evidence" value="ECO:0007669"/>
    <property type="project" value="UniProtKB-UniRule"/>
</dbReference>
<dbReference type="GO" id="GO:0010420">
    <property type="term" value="F:polyprenyldihydroxybenzoate methyltransferase activity"/>
    <property type="evidence" value="ECO:0007669"/>
    <property type="project" value="InterPro"/>
</dbReference>
<dbReference type="GO" id="GO:0032259">
    <property type="term" value="P:methylation"/>
    <property type="evidence" value="ECO:0007669"/>
    <property type="project" value="UniProtKB-KW"/>
</dbReference>
<dbReference type="CDD" id="cd02440">
    <property type="entry name" value="AdoMet_MTases"/>
    <property type="match status" value="1"/>
</dbReference>
<dbReference type="FunFam" id="3.40.50.150:FF:000028">
    <property type="entry name" value="Ubiquinone biosynthesis O-methyltransferase"/>
    <property type="match status" value="1"/>
</dbReference>
<dbReference type="Gene3D" id="3.40.50.150">
    <property type="entry name" value="Vaccinia Virus protein VP39"/>
    <property type="match status" value="1"/>
</dbReference>
<dbReference type="HAMAP" id="MF_00472">
    <property type="entry name" value="UbiG"/>
    <property type="match status" value="1"/>
</dbReference>
<dbReference type="InterPro" id="IPR029063">
    <property type="entry name" value="SAM-dependent_MTases_sf"/>
</dbReference>
<dbReference type="InterPro" id="IPR010233">
    <property type="entry name" value="UbiG_MeTrfase"/>
</dbReference>
<dbReference type="NCBIfam" id="TIGR01983">
    <property type="entry name" value="UbiG"/>
    <property type="match status" value="1"/>
</dbReference>
<dbReference type="PANTHER" id="PTHR43464">
    <property type="entry name" value="METHYLTRANSFERASE"/>
    <property type="match status" value="1"/>
</dbReference>
<dbReference type="PANTHER" id="PTHR43464:SF19">
    <property type="entry name" value="UBIQUINONE BIOSYNTHESIS O-METHYLTRANSFERASE, MITOCHONDRIAL"/>
    <property type="match status" value="1"/>
</dbReference>
<dbReference type="Pfam" id="PF13489">
    <property type="entry name" value="Methyltransf_23"/>
    <property type="match status" value="1"/>
</dbReference>
<dbReference type="SUPFAM" id="SSF53335">
    <property type="entry name" value="S-adenosyl-L-methionine-dependent methyltransferases"/>
    <property type="match status" value="1"/>
</dbReference>
<evidence type="ECO:0000255" key="1">
    <source>
        <dbReference type="HAMAP-Rule" id="MF_00472"/>
    </source>
</evidence>
<accession>C1DRQ3</accession>
<gene>
    <name evidence="1" type="primary">ubiG</name>
    <name type="ordered locus">Avin_15760</name>
</gene>
<organism>
    <name type="scientific">Azotobacter vinelandii (strain DJ / ATCC BAA-1303)</name>
    <dbReference type="NCBI Taxonomy" id="322710"/>
    <lineage>
        <taxon>Bacteria</taxon>
        <taxon>Pseudomonadati</taxon>
        <taxon>Pseudomonadota</taxon>
        <taxon>Gammaproteobacteria</taxon>
        <taxon>Pseudomonadales</taxon>
        <taxon>Pseudomonadaceae</taxon>
        <taxon>Azotobacter</taxon>
    </lineage>
</organism>
<name>UBIG_AZOVD</name>
<sequence length="232" mass="25836">MSNVDHAEIAKFEALAHRWWDRESEFKPLHEINPLRVNWIEEHVRLAGKKVLDVGCGGGILSEAMALRGAAVTAIDMGEAPLAVARLHQLESGVEVDYRQSTVEALAAEMPGRFDVVTCLEMLEHVPDPASVIHACHTLVKPGGQVFFSTINRNPKAYLLAIIGAEYLLKLLPRGTHDFRKFIRPSELGAWCRASGLAIGDIVGLTYNPLTRHYKLGTDVDVNYMIQTWREE</sequence>
<proteinExistence type="inferred from homology"/>
<keyword id="KW-0489">Methyltransferase</keyword>
<keyword id="KW-0949">S-adenosyl-L-methionine</keyword>
<keyword id="KW-0808">Transferase</keyword>
<keyword id="KW-0831">Ubiquinone biosynthesis</keyword>
<feature type="chain" id="PRO_1000206354" description="Ubiquinone biosynthesis O-methyltransferase">
    <location>
        <begin position="1"/>
        <end position="232"/>
    </location>
</feature>
<feature type="binding site" evidence="1">
    <location>
        <position position="36"/>
    </location>
    <ligand>
        <name>S-adenosyl-L-methionine</name>
        <dbReference type="ChEBI" id="CHEBI:59789"/>
    </ligand>
</feature>
<feature type="binding site" evidence="1">
    <location>
        <position position="55"/>
    </location>
    <ligand>
        <name>S-adenosyl-L-methionine</name>
        <dbReference type="ChEBI" id="CHEBI:59789"/>
    </ligand>
</feature>
<feature type="binding site" evidence="1">
    <location>
        <position position="76"/>
    </location>
    <ligand>
        <name>S-adenosyl-L-methionine</name>
        <dbReference type="ChEBI" id="CHEBI:59789"/>
    </ligand>
</feature>
<feature type="binding site" evidence="1">
    <location>
        <position position="120"/>
    </location>
    <ligand>
        <name>S-adenosyl-L-methionine</name>
        <dbReference type="ChEBI" id="CHEBI:59789"/>
    </ligand>
</feature>
<comment type="function">
    <text evidence="1">O-methyltransferase that catalyzes the 2 O-methylation steps in the ubiquinone biosynthetic pathway.</text>
</comment>
<comment type="catalytic activity">
    <reaction evidence="1">
        <text>a 3-demethylubiquinol + S-adenosyl-L-methionine = a ubiquinol + S-adenosyl-L-homocysteine + H(+)</text>
        <dbReference type="Rhea" id="RHEA:44380"/>
        <dbReference type="Rhea" id="RHEA-COMP:9566"/>
        <dbReference type="Rhea" id="RHEA-COMP:10914"/>
        <dbReference type="ChEBI" id="CHEBI:15378"/>
        <dbReference type="ChEBI" id="CHEBI:17976"/>
        <dbReference type="ChEBI" id="CHEBI:57856"/>
        <dbReference type="ChEBI" id="CHEBI:59789"/>
        <dbReference type="ChEBI" id="CHEBI:84422"/>
        <dbReference type="EC" id="2.1.1.64"/>
    </reaction>
</comment>
<comment type="catalytic activity">
    <reaction evidence="1">
        <text>a 3-(all-trans-polyprenyl)benzene-1,2-diol + S-adenosyl-L-methionine = a 2-methoxy-6-(all-trans-polyprenyl)phenol + S-adenosyl-L-homocysteine + H(+)</text>
        <dbReference type="Rhea" id="RHEA:31411"/>
        <dbReference type="Rhea" id="RHEA-COMP:9550"/>
        <dbReference type="Rhea" id="RHEA-COMP:9551"/>
        <dbReference type="ChEBI" id="CHEBI:15378"/>
        <dbReference type="ChEBI" id="CHEBI:57856"/>
        <dbReference type="ChEBI" id="CHEBI:59789"/>
        <dbReference type="ChEBI" id="CHEBI:62729"/>
        <dbReference type="ChEBI" id="CHEBI:62731"/>
        <dbReference type="EC" id="2.1.1.222"/>
    </reaction>
</comment>
<comment type="pathway">
    <text evidence="1">Cofactor biosynthesis; ubiquinone biosynthesis.</text>
</comment>
<comment type="similarity">
    <text evidence="1">Belongs to the methyltransferase superfamily. UbiG/COQ3 family.</text>
</comment>
<reference key="1">
    <citation type="journal article" date="2009" name="J. Bacteriol.">
        <title>Genome sequence of Azotobacter vinelandii, an obligate aerobe specialized to support diverse anaerobic metabolic processes.</title>
        <authorList>
            <person name="Setubal J.C."/>
            <person name="Dos Santos P."/>
            <person name="Goldman B.S."/>
            <person name="Ertesvaag H."/>
            <person name="Espin G."/>
            <person name="Rubio L.M."/>
            <person name="Valla S."/>
            <person name="Almeida N.F."/>
            <person name="Balasubramanian D."/>
            <person name="Cromes L."/>
            <person name="Curatti L."/>
            <person name="Du Z."/>
            <person name="Godsy E."/>
            <person name="Goodner B."/>
            <person name="Hellner-Burris K."/>
            <person name="Hernandez J.A."/>
            <person name="Houmiel K."/>
            <person name="Imperial J."/>
            <person name="Kennedy C."/>
            <person name="Larson T.J."/>
            <person name="Latreille P."/>
            <person name="Ligon L.S."/>
            <person name="Lu J."/>
            <person name="Maerk M."/>
            <person name="Miller N.M."/>
            <person name="Norton S."/>
            <person name="O'Carroll I.P."/>
            <person name="Paulsen I."/>
            <person name="Raulfs E.C."/>
            <person name="Roemer R."/>
            <person name="Rosser J."/>
            <person name="Segura D."/>
            <person name="Slater S."/>
            <person name="Stricklin S.L."/>
            <person name="Studholme D.J."/>
            <person name="Sun J."/>
            <person name="Viana C.J."/>
            <person name="Wallin E."/>
            <person name="Wang B."/>
            <person name="Wheeler C."/>
            <person name="Zhu H."/>
            <person name="Dean D.R."/>
            <person name="Dixon R."/>
            <person name="Wood D."/>
        </authorList>
    </citation>
    <scope>NUCLEOTIDE SEQUENCE [LARGE SCALE GENOMIC DNA]</scope>
    <source>
        <strain>DJ / ATCC BAA-1303</strain>
    </source>
</reference>